<comment type="function">
    <text evidence="1">Involved in the biosynthesis of branched-chain amino acids (BCAA). Catalyzes an alkyl-migration followed by a ketol-acid reduction of (S)-2-acetolactate (S2AL) to yield (R)-2,3-dihydroxy-isovalerate. In the isomerase reaction, S2AL is rearranged via a Mg-dependent methyl migration to produce 3-hydroxy-3-methyl-2-ketobutyrate (HMKB). In the reductase reaction, this 2-ketoacid undergoes a metal-dependent reduction by NADPH to yield (R)-2,3-dihydroxy-isovalerate.</text>
</comment>
<comment type="catalytic activity">
    <reaction evidence="1">
        <text>(2R)-2,3-dihydroxy-3-methylbutanoate + NADP(+) = (2S)-2-acetolactate + NADPH + H(+)</text>
        <dbReference type="Rhea" id="RHEA:22068"/>
        <dbReference type="ChEBI" id="CHEBI:15378"/>
        <dbReference type="ChEBI" id="CHEBI:49072"/>
        <dbReference type="ChEBI" id="CHEBI:57783"/>
        <dbReference type="ChEBI" id="CHEBI:58349"/>
        <dbReference type="ChEBI" id="CHEBI:58476"/>
        <dbReference type="EC" id="1.1.1.86"/>
    </reaction>
</comment>
<comment type="catalytic activity">
    <reaction evidence="1">
        <text>(2R,3R)-2,3-dihydroxy-3-methylpentanoate + NADP(+) = (S)-2-ethyl-2-hydroxy-3-oxobutanoate + NADPH + H(+)</text>
        <dbReference type="Rhea" id="RHEA:13493"/>
        <dbReference type="ChEBI" id="CHEBI:15378"/>
        <dbReference type="ChEBI" id="CHEBI:49256"/>
        <dbReference type="ChEBI" id="CHEBI:49258"/>
        <dbReference type="ChEBI" id="CHEBI:57783"/>
        <dbReference type="ChEBI" id="CHEBI:58349"/>
        <dbReference type="EC" id="1.1.1.86"/>
    </reaction>
</comment>
<comment type="cofactor">
    <cofactor evidence="1">
        <name>Mg(2+)</name>
        <dbReference type="ChEBI" id="CHEBI:18420"/>
    </cofactor>
    <text evidence="1">Binds 2 magnesium ions per subunit.</text>
</comment>
<comment type="pathway">
    <text evidence="1">Amino-acid biosynthesis; L-isoleucine biosynthesis; L-isoleucine from 2-oxobutanoate: step 2/4.</text>
</comment>
<comment type="pathway">
    <text evidence="1">Amino-acid biosynthesis; L-valine biosynthesis; L-valine from pyruvate: step 2/4.</text>
</comment>
<comment type="similarity">
    <text evidence="1">Belongs to the ketol-acid reductoisomerase family.</text>
</comment>
<gene>
    <name evidence="1" type="primary">ilvC</name>
    <name type="ordered locus">gll2657</name>
</gene>
<keyword id="KW-0028">Amino-acid biosynthesis</keyword>
<keyword id="KW-0100">Branched-chain amino acid biosynthesis</keyword>
<keyword id="KW-0460">Magnesium</keyword>
<keyword id="KW-0479">Metal-binding</keyword>
<keyword id="KW-0521">NADP</keyword>
<keyword id="KW-0560">Oxidoreductase</keyword>
<keyword id="KW-1185">Reference proteome</keyword>
<sequence length="332" mass="36554">MTRARMYYDEDADLSVLDNKTIAIVGYGSQGHAHALNLKDSGIDVIVGLYEGSRSWARAENEGLAVYPTAEAAAKADLVMILLPDEVQREIYNRDIAPHLGTGKTLAFAHGFNIHFSQIVPSQEVDVLMVAPKGPGHLVRRVFTEGKGVPCLFAVEQDASGRARATAMAYARAIGGTRAGILETTFREEAETDLFGEQTVLCGGLTALIKAGFETLVEAGYQPELAYFECLHEVKLIVDLIVEGGLAKMRDSISNTAEFGDYTRGPRIVDERTKAEMKKILAEIQNGEFAKQWVLDSQANYASFKAMRRREAEHPIEEVGADLRKMMSWLRP</sequence>
<reference key="1">
    <citation type="journal article" date="2003" name="DNA Res.">
        <title>Complete genome structure of Gloeobacter violaceus PCC 7421, a cyanobacterium that lacks thylakoids.</title>
        <authorList>
            <person name="Nakamura Y."/>
            <person name="Kaneko T."/>
            <person name="Sato S."/>
            <person name="Mimuro M."/>
            <person name="Miyashita H."/>
            <person name="Tsuchiya T."/>
            <person name="Sasamoto S."/>
            <person name="Watanabe A."/>
            <person name="Kawashima K."/>
            <person name="Kishida Y."/>
            <person name="Kiyokawa C."/>
            <person name="Kohara M."/>
            <person name="Matsumoto M."/>
            <person name="Matsuno A."/>
            <person name="Nakazaki N."/>
            <person name="Shimpo S."/>
            <person name="Takeuchi C."/>
            <person name="Yamada M."/>
            <person name="Tabata S."/>
        </authorList>
    </citation>
    <scope>NUCLEOTIDE SEQUENCE [LARGE SCALE GENOMIC DNA]</scope>
    <source>
        <strain>ATCC 29082 / PCC 7421</strain>
    </source>
</reference>
<accession>Q7NH80</accession>
<protein>
    <recommendedName>
        <fullName evidence="1">Ketol-acid reductoisomerase (NADP(+))</fullName>
        <shortName evidence="1">KARI</shortName>
        <ecNumber evidence="1">1.1.1.86</ecNumber>
    </recommendedName>
    <alternativeName>
        <fullName evidence="1">Acetohydroxy-acid isomeroreductase</fullName>
        <shortName evidence="1">AHIR</shortName>
    </alternativeName>
    <alternativeName>
        <fullName evidence="1">Alpha-keto-beta-hydroxylacyl reductoisomerase</fullName>
    </alternativeName>
    <alternativeName>
        <fullName evidence="1">Ketol-acid reductoisomerase type 1</fullName>
    </alternativeName>
    <alternativeName>
        <fullName evidence="1">Ketol-acid reductoisomerase type I</fullName>
    </alternativeName>
</protein>
<evidence type="ECO:0000255" key="1">
    <source>
        <dbReference type="HAMAP-Rule" id="MF_00435"/>
    </source>
</evidence>
<evidence type="ECO:0000255" key="2">
    <source>
        <dbReference type="PROSITE-ProRule" id="PRU01197"/>
    </source>
</evidence>
<evidence type="ECO:0000255" key="3">
    <source>
        <dbReference type="PROSITE-ProRule" id="PRU01198"/>
    </source>
</evidence>
<feature type="chain" id="PRO_0000151313" description="Ketol-acid reductoisomerase (NADP(+))">
    <location>
        <begin position="1"/>
        <end position="332"/>
    </location>
</feature>
<feature type="domain" description="KARI N-terminal Rossmann" evidence="2">
    <location>
        <begin position="4"/>
        <end position="184"/>
    </location>
</feature>
<feature type="domain" description="KARI C-terminal knotted" evidence="3">
    <location>
        <begin position="185"/>
        <end position="330"/>
    </location>
</feature>
<feature type="active site" evidence="1">
    <location>
        <position position="110"/>
    </location>
</feature>
<feature type="binding site" evidence="1">
    <location>
        <begin position="27"/>
        <end position="30"/>
    </location>
    <ligand>
        <name>NADP(+)</name>
        <dbReference type="ChEBI" id="CHEBI:58349"/>
    </ligand>
</feature>
<feature type="binding site" evidence="1">
    <location>
        <position position="53"/>
    </location>
    <ligand>
        <name>NADP(+)</name>
        <dbReference type="ChEBI" id="CHEBI:58349"/>
    </ligand>
</feature>
<feature type="binding site" evidence="1">
    <location>
        <position position="55"/>
    </location>
    <ligand>
        <name>NADP(+)</name>
        <dbReference type="ChEBI" id="CHEBI:58349"/>
    </ligand>
</feature>
<feature type="binding site" evidence="1">
    <location>
        <begin position="85"/>
        <end position="88"/>
    </location>
    <ligand>
        <name>NADP(+)</name>
        <dbReference type="ChEBI" id="CHEBI:58349"/>
    </ligand>
</feature>
<feature type="binding site" evidence="1">
    <location>
        <position position="136"/>
    </location>
    <ligand>
        <name>NADP(+)</name>
        <dbReference type="ChEBI" id="CHEBI:58349"/>
    </ligand>
</feature>
<feature type="binding site" evidence="1">
    <location>
        <position position="193"/>
    </location>
    <ligand>
        <name>Mg(2+)</name>
        <dbReference type="ChEBI" id="CHEBI:18420"/>
        <label>1</label>
    </ligand>
</feature>
<feature type="binding site" evidence="1">
    <location>
        <position position="193"/>
    </location>
    <ligand>
        <name>Mg(2+)</name>
        <dbReference type="ChEBI" id="CHEBI:18420"/>
        <label>2</label>
    </ligand>
</feature>
<feature type="binding site" evidence="1">
    <location>
        <position position="197"/>
    </location>
    <ligand>
        <name>Mg(2+)</name>
        <dbReference type="ChEBI" id="CHEBI:18420"/>
        <label>1</label>
    </ligand>
</feature>
<feature type="binding site" evidence="1">
    <location>
        <position position="229"/>
    </location>
    <ligand>
        <name>Mg(2+)</name>
        <dbReference type="ChEBI" id="CHEBI:18420"/>
        <label>2</label>
    </ligand>
</feature>
<feature type="binding site" evidence="1">
    <location>
        <position position="233"/>
    </location>
    <ligand>
        <name>Mg(2+)</name>
        <dbReference type="ChEBI" id="CHEBI:18420"/>
        <label>2</label>
    </ligand>
</feature>
<feature type="binding site" evidence="1">
    <location>
        <position position="254"/>
    </location>
    <ligand>
        <name>substrate</name>
    </ligand>
</feature>
<proteinExistence type="inferred from homology"/>
<dbReference type="EC" id="1.1.1.86" evidence="1"/>
<dbReference type="EMBL" id="BA000045">
    <property type="protein sequence ID" value="BAC90598.1"/>
    <property type="molecule type" value="Genomic_DNA"/>
</dbReference>
<dbReference type="RefSeq" id="NP_925603.1">
    <property type="nucleotide sequence ID" value="NC_005125.1"/>
</dbReference>
<dbReference type="RefSeq" id="WP_011142651.1">
    <property type="nucleotide sequence ID" value="NC_005125.1"/>
</dbReference>
<dbReference type="SMR" id="Q7NH80"/>
<dbReference type="FunCoup" id="Q7NH80">
    <property type="interactions" value="216"/>
</dbReference>
<dbReference type="STRING" id="251221.gene:10760158"/>
<dbReference type="EnsemblBacteria" id="BAC90598">
    <property type="protein sequence ID" value="BAC90598"/>
    <property type="gene ID" value="BAC90598"/>
</dbReference>
<dbReference type="KEGG" id="gvi:gll2657"/>
<dbReference type="PATRIC" id="fig|251221.4.peg.2692"/>
<dbReference type="eggNOG" id="COG0059">
    <property type="taxonomic scope" value="Bacteria"/>
</dbReference>
<dbReference type="HOGENOM" id="CLU_033821_0_1_3"/>
<dbReference type="InParanoid" id="Q7NH80"/>
<dbReference type="OrthoDB" id="9804088at2"/>
<dbReference type="PhylomeDB" id="Q7NH80"/>
<dbReference type="UniPathway" id="UPA00047">
    <property type="reaction ID" value="UER00056"/>
</dbReference>
<dbReference type="UniPathway" id="UPA00049">
    <property type="reaction ID" value="UER00060"/>
</dbReference>
<dbReference type="Proteomes" id="UP000000557">
    <property type="component" value="Chromosome"/>
</dbReference>
<dbReference type="GO" id="GO:0005829">
    <property type="term" value="C:cytosol"/>
    <property type="evidence" value="ECO:0000318"/>
    <property type="project" value="GO_Central"/>
</dbReference>
<dbReference type="GO" id="GO:0004455">
    <property type="term" value="F:ketol-acid reductoisomerase activity"/>
    <property type="evidence" value="ECO:0000318"/>
    <property type="project" value="GO_Central"/>
</dbReference>
<dbReference type="GO" id="GO:0000287">
    <property type="term" value="F:magnesium ion binding"/>
    <property type="evidence" value="ECO:0007669"/>
    <property type="project" value="UniProtKB-UniRule"/>
</dbReference>
<dbReference type="GO" id="GO:0050661">
    <property type="term" value="F:NADP binding"/>
    <property type="evidence" value="ECO:0007669"/>
    <property type="project" value="InterPro"/>
</dbReference>
<dbReference type="GO" id="GO:0009097">
    <property type="term" value="P:isoleucine biosynthetic process"/>
    <property type="evidence" value="ECO:0000318"/>
    <property type="project" value="GO_Central"/>
</dbReference>
<dbReference type="GO" id="GO:0009099">
    <property type="term" value="P:L-valine biosynthetic process"/>
    <property type="evidence" value="ECO:0000318"/>
    <property type="project" value="GO_Central"/>
</dbReference>
<dbReference type="FunFam" id="3.40.50.720:FF:000023">
    <property type="entry name" value="Ketol-acid reductoisomerase (NADP(+))"/>
    <property type="match status" value="1"/>
</dbReference>
<dbReference type="Gene3D" id="6.10.240.10">
    <property type="match status" value="1"/>
</dbReference>
<dbReference type="Gene3D" id="3.40.50.720">
    <property type="entry name" value="NAD(P)-binding Rossmann-like Domain"/>
    <property type="match status" value="1"/>
</dbReference>
<dbReference type="HAMAP" id="MF_00435">
    <property type="entry name" value="IlvC"/>
    <property type="match status" value="1"/>
</dbReference>
<dbReference type="InterPro" id="IPR008927">
    <property type="entry name" value="6-PGluconate_DH-like_C_sf"/>
</dbReference>
<dbReference type="InterPro" id="IPR013023">
    <property type="entry name" value="KARI"/>
</dbReference>
<dbReference type="InterPro" id="IPR000506">
    <property type="entry name" value="KARI_C"/>
</dbReference>
<dbReference type="InterPro" id="IPR013116">
    <property type="entry name" value="KARI_N"/>
</dbReference>
<dbReference type="InterPro" id="IPR014359">
    <property type="entry name" value="KARI_prok"/>
</dbReference>
<dbReference type="InterPro" id="IPR036291">
    <property type="entry name" value="NAD(P)-bd_dom_sf"/>
</dbReference>
<dbReference type="NCBIfam" id="TIGR00465">
    <property type="entry name" value="ilvC"/>
    <property type="match status" value="1"/>
</dbReference>
<dbReference type="NCBIfam" id="NF004017">
    <property type="entry name" value="PRK05479.1"/>
    <property type="match status" value="1"/>
</dbReference>
<dbReference type="NCBIfam" id="NF009940">
    <property type="entry name" value="PRK13403.1"/>
    <property type="match status" value="1"/>
</dbReference>
<dbReference type="PANTHER" id="PTHR21371">
    <property type="entry name" value="KETOL-ACID REDUCTOISOMERASE, MITOCHONDRIAL"/>
    <property type="match status" value="1"/>
</dbReference>
<dbReference type="PANTHER" id="PTHR21371:SF1">
    <property type="entry name" value="KETOL-ACID REDUCTOISOMERASE, MITOCHONDRIAL"/>
    <property type="match status" value="1"/>
</dbReference>
<dbReference type="Pfam" id="PF01450">
    <property type="entry name" value="KARI_C"/>
    <property type="match status" value="1"/>
</dbReference>
<dbReference type="Pfam" id="PF07991">
    <property type="entry name" value="KARI_N"/>
    <property type="match status" value="1"/>
</dbReference>
<dbReference type="PIRSF" id="PIRSF000116">
    <property type="entry name" value="IlvC_gammaproteo"/>
    <property type="match status" value="1"/>
</dbReference>
<dbReference type="SUPFAM" id="SSF48179">
    <property type="entry name" value="6-phosphogluconate dehydrogenase C-terminal domain-like"/>
    <property type="match status" value="1"/>
</dbReference>
<dbReference type="SUPFAM" id="SSF51735">
    <property type="entry name" value="NAD(P)-binding Rossmann-fold domains"/>
    <property type="match status" value="1"/>
</dbReference>
<dbReference type="PROSITE" id="PS51851">
    <property type="entry name" value="KARI_C"/>
    <property type="match status" value="1"/>
</dbReference>
<dbReference type="PROSITE" id="PS51850">
    <property type="entry name" value="KARI_N"/>
    <property type="match status" value="1"/>
</dbReference>
<organism>
    <name type="scientific">Gloeobacter violaceus (strain ATCC 29082 / PCC 7421)</name>
    <dbReference type="NCBI Taxonomy" id="251221"/>
    <lineage>
        <taxon>Bacteria</taxon>
        <taxon>Bacillati</taxon>
        <taxon>Cyanobacteriota</taxon>
        <taxon>Cyanophyceae</taxon>
        <taxon>Gloeobacterales</taxon>
        <taxon>Gloeobacteraceae</taxon>
        <taxon>Gloeobacter</taxon>
    </lineage>
</organism>
<name>ILVC_GLOVI</name>